<feature type="chain" id="PRO_1000136310" description="UPF0231 protein VFMJ11_2262">
    <location>
        <begin position="1"/>
        <end position="122"/>
    </location>
</feature>
<accession>B5FAN7</accession>
<protein>
    <recommendedName>
        <fullName evidence="1">UPF0231 protein VFMJ11_2262</fullName>
    </recommendedName>
</protein>
<organism>
    <name type="scientific">Aliivibrio fischeri (strain MJ11)</name>
    <name type="common">Vibrio fischeri</name>
    <dbReference type="NCBI Taxonomy" id="388396"/>
    <lineage>
        <taxon>Bacteria</taxon>
        <taxon>Pseudomonadati</taxon>
        <taxon>Pseudomonadota</taxon>
        <taxon>Gammaproteobacteria</taxon>
        <taxon>Vibrionales</taxon>
        <taxon>Vibrionaceae</taxon>
        <taxon>Aliivibrio</taxon>
    </lineage>
</organism>
<proteinExistence type="inferred from homology"/>
<reference key="1">
    <citation type="submission" date="2008-08" db="EMBL/GenBank/DDBJ databases">
        <title>Complete sequence of Vibrio fischeri strain MJ11.</title>
        <authorList>
            <person name="Mandel M.J."/>
            <person name="Stabb E.V."/>
            <person name="Ruby E.G."/>
            <person name="Ferriera S."/>
            <person name="Johnson J."/>
            <person name="Kravitz S."/>
            <person name="Beeson K."/>
            <person name="Sutton G."/>
            <person name="Rogers Y.-H."/>
            <person name="Friedman R."/>
            <person name="Frazier M."/>
            <person name="Venter J.C."/>
        </authorList>
    </citation>
    <scope>NUCLEOTIDE SEQUENCE [LARGE SCALE GENOMIC DNA]</scope>
    <source>
        <strain>MJ11</strain>
    </source>
</reference>
<evidence type="ECO:0000255" key="1">
    <source>
        <dbReference type="HAMAP-Rule" id="MF_01053"/>
    </source>
</evidence>
<comment type="similarity">
    <text evidence="1">Belongs to the UPF0231 family.</text>
</comment>
<name>Y2262_ALIFM</name>
<dbReference type="EMBL" id="CP001139">
    <property type="protein sequence ID" value="ACH66035.1"/>
    <property type="molecule type" value="Genomic_DNA"/>
</dbReference>
<dbReference type="RefSeq" id="WP_005420832.1">
    <property type="nucleotide sequence ID" value="NC_011184.1"/>
</dbReference>
<dbReference type="SMR" id="B5FAN7"/>
<dbReference type="GeneID" id="54164864"/>
<dbReference type="KEGG" id="vfm:VFMJ11_2262"/>
<dbReference type="HOGENOM" id="CLU_139226_0_0_6"/>
<dbReference type="Proteomes" id="UP000001857">
    <property type="component" value="Chromosome I"/>
</dbReference>
<dbReference type="HAMAP" id="MF_01053">
    <property type="entry name" value="UPF0231"/>
    <property type="match status" value="1"/>
</dbReference>
<dbReference type="InterPro" id="IPR008249">
    <property type="entry name" value="UPF0231"/>
</dbReference>
<dbReference type="NCBIfam" id="NF003578">
    <property type="entry name" value="PRK05248.2-3"/>
    <property type="match status" value="1"/>
</dbReference>
<dbReference type="Pfam" id="PF06062">
    <property type="entry name" value="UPF0231"/>
    <property type="match status" value="1"/>
</dbReference>
<dbReference type="PIRSF" id="PIRSF006287">
    <property type="entry name" value="UCP006287"/>
    <property type="match status" value="1"/>
</dbReference>
<gene>
    <name type="ordered locus">VFMJ11_2262</name>
</gene>
<sequence>MDYEFKKNTLEGTYHANFSMGHEAMGRWLVEDVAKNTDLLAEIYKHIALIKNTQDEWTLSGKVMTLVLSDQEVIVQENALFEQSDEEFEEDIHMYDDECISVCGLEDFETMLQSWEAFINRF</sequence>